<gene>
    <name evidence="1" type="primary">truA</name>
    <name type="ordered locus">SYNPCC7002_A1040</name>
</gene>
<reference key="1">
    <citation type="submission" date="2008-02" db="EMBL/GenBank/DDBJ databases">
        <title>Complete sequence of Synechococcus sp. PCC 7002.</title>
        <authorList>
            <person name="Li T."/>
            <person name="Zhao J."/>
            <person name="Zhao C."/>
            <person name="Liu Z."/>
            <person name="Zhao F."/>
            <person name="Marquardt J."/>
            <person name="Nomura C.T."/>
            <person name="Persson S."/>
            <person name="Detter J.C."/>
            <person name="Richardson P.M."/>
            <person name="Lanz C."/>
            <person name="Schuster S.C."/>
            <person name="Wang J."/>
            <person name="Li S."/>
            <person name="Huang X."/>
            <person name="Cai T."/>
            <person name="Yu Z."/>
            <person name="Luo J."/>
            <person name="Zhao J."/>
            <person name="Bryant D.A."/>
        </authorList>
    </citation>
    <scope>NUCLEOTIDE SEQUENCE [LARGE SCALE GENOMIC DNA]</scope>
    <source>
        <strain>ATCC 27264 / PCC 7002 / PR-6</strain>
    </source>
</reference>
<protein>
    <recommendedName>
        <fullName evidence="1">tRNA pseudouridine synthase A</fullName>
        <ecNumber evidence="1">5.4.99.12</ecNumber>
    </recommendedName>
    <alternativeName>
        <fullName evidence="1">tRNA pseudouridine(38-40) synthase</fullName>
    </alternativeName>
    <alternativeName>
        <fullName evidence="1">tRNA pseudouridylate synthase I</fullName>
    </alternativeName>
    <alternativeName>
        <fullName evidence="1">tRNA-uridine isomerase I</fullName>
    </alternativeName>
</protein>
<organism>
    <name type="scientific">Picosynechococcus sp. (strain ATCC 27264 / PCC 7002 / PR-6)</name>
    <name type="common">Agmenellum quadruplicatum</name>
    <dbReference type="NCBI Taxonomy" id="32049"/>
    <lineage>
        <taxon>Bacteria</taxon>
        <taxon>Bacillati</taxon>
        <taxon>Cyanobacteriota</taxon>
        <taxon>Cyanophyceae</taxon>
        <taxon>Oscillatoriophycideae</taxon>
        <taxon>Chroococcales</taxon>
        <taxon>Geminocystaceae</taxon>
        <taxon>Picosynechococcus</taxon>
    </lineage>
</organism>
<dbReference type="EC" id="5.4.99.12" evidence="1"/>
<dbReference type="EMBL" id="CP000951">
    <property type="protein sequence ID" value="ACA99042.1"/>
    <property type="molecule type" value="Genomic_DNA"/>
</dbReference>
<dbReference type="RefSeq" id="WP_012306666.1">
    <property type="nucleotide sequence ID" value="NZ_JAHHPU010000001.1"/>
</dbReference>
<dbReference type="SMR" id="B1XJI2"/>
<dbReference type="STRING" id="32049.SYNPCC7002_A1040"/>
<dbReference type="KEGG" id="syp:SYNPCC7002_A1040"/>
<dbReference type="eggNOG" id="COG0101">
    <property type="taxonomic scope" value="Bacteria"/>
</dbReference>
<dbReference type="HOGENOM" id="CLU_014673_0_1_3"/>
<dbReference type="Proteomes" id="UP000001688">
    <property type="component" value="Chromosome"/>
</dbReference>
<dbReference type="GO" id="GO:0003723">
    <property type="term" value="F:RNA binding"/>
    <property type="evidence" value="ECO:0007669"/>
    <property type="project" value="InterPro"/>
</dbReference>
<dbReference type="GO" id="GO:0160147">
    <property type="term" value="F:tRNA pseudouridine(38-40) synthase activity"/>
    <property type="evidence" value="ECO:0007669"/>
    <property type="project" value="UniProtKB-EC"/>
</dbReference>
<dbReference type="GO" id="GO:0031119">
    <property type="term" value="P:tRNA pseudouridine synthesis"/>
    <property type="evidence" value="ECO:0007669"/>
    <property type="project" value="UniProtKB-UniRule"/>
</dbReference>
<dbReference type="CDD" id="cd02570">
    <property type="entry name" value="PseudoU_synth_EcTruA"/>
    <property type="match status" value="1"/>
</dbReference>
<dbReference type="FunFam" id="3.30.70.580:FF:000001">
    <property type="entry name" value="tRNA pseudouridine synthase A"/>
    <property type="match status" value="1"/>
</dbReference>
<dbReference type="Gene3D" id="3.30.70.660">
    <property type="entry name" value="Pseudouridine synthase I, catalytic domain, C-terminal subdomain"/>
    <property type="match status" value="1"/>
</dbReference>
<dbReference type="Gene3D" id="3.30.70.580">
    <property type="entry name" value="Pseudouridine synthase I, catalytic domain, N-terminal subdomain"/>
    <property type="match status" value="1"/>
</dbReference>
<dbReference type="HAMAP" id="MF_00171">
    <property type="entry name" value="TruA"/>
    <property type="match status" value="1"/>
</dbReference>
<dbReference type="InterPro" id="IPR020103">
    <property type="entry name" value="PsdUridine_synth_cat_dom_sf"/>
</dbReference>
<dbReference type="InterPro" id="IPR001406">
    <property type="entry name" value="PsdUridine_synth_TruA"/>
</dbReference>
<dbReference type="InterPro" id="IPR020097">
    <property type="entry name" value="PsdUridine_synth_TruA_a/b_dom"/>
</dbReference>
<dbReference type="InterPro" id="IPR020095">
    <property type="entry name" value="PsdUridine_synth_TruA_C"/>
</dbReference>
<dbReference type="InterPro" id="IPR020094">
    <property type="entry name" value="TruA/RsuA/RluB/E/F_N"/>
</dbReference>
<dbReference type="NCBIfam" id="TIGR00071">
    <property type="entry name" value="hisT_truA"/>
    <property type="match status" value="1"/>
</dbReference>
<dbReference type="PANTHER" id="PTHR11142">
    <property type="entry name" value="PSEUDOURIDYLATE SYNTHASE"/>
    <property type="match status" value="1"/>
</dbReference>
<dbReference type="PANTHER" id="PTHR11142:SF0">
    <property type="entry name" value="TRNA PSEUDOURIDINE SYNTHASE-LIKE 1"/>
    <property type="match status" value="1"/>
</dbReference>
<dbReference type="Pfam" id="PF01416">
    <property type="entry name" value="PseudoU_synth_1"/>
    <property type="match status" value="2"/>
</dbReference>
<dbReference type="PIRSF" id="PIRSF001430">
    <property type="entry name" value="tRNA_psdUrid_synth"/>
    <property type="match status" value="1"/>
</dbReference>
<dbReference type="SUPFAM" id="SSF55120">
    <property type="entry name" value="Pseudouridine synthase"/>
    <property type="match status" value="1"/>
</dbReference>
<proteinExistence type="inferred from homology"/>
<feature type="chain" id="PRO_1000097795" description="tRNA pseudouridine synthase A">
    <location>
        <begin position="1"/>
        <end position="274"/>
    </location>
</feature>
<feature type="active site" description="Nucleophile" evidence="1">
    <location>
        <position position="60"/>
    </location>
</feature>
<feature type="binding site" evidence="1">
    <location>
        <position position="118"/>
    </location>
    <ligand>
        <name>substrate</name>
    </ligand>
</feature>
<accession>B1XJI2</accession>
<name>TRUA_PICP2</name>
<comment type="function">
    <text evidence="1">Formation of pseudouridine at positions 38, 39 and 40 in the anticodon stem and loop of transfer RNAs.</text>
</comment>
<comment type="catalytic activity">
    <reaction evidence="1">
        <text>uridine(38/39/40) in tRNA = pseudouridine(38/39/40) in tRNA</text>
        <dbReference type="Rhea" id="RHEA:22376"/>
        <dbReference type="Rhea" id="RHEA-COMP:10085"/>
        <dbReference type="Rhea" id="RHEA-COMP:10087"/>
        <dbReference type="ChEBI" id="CHEBI:65314"/>
        <dbReference type="ChEBI" id="CHEBI:65315"/>
        <dbReference type="EC" id="5.4.99.12"/>
    </reaction>
</comment>
<comment type="subunit">
    <text evidence="1">Homodimer.</text>
</comment>
<comment type="similarity">
    <text evidence="1">Belongs to the tRNA pseudouridine synthase TruA family.</text>
</comment>
<keyword id="KW-0413">Isomerase</keyword>
<keyword id="KW-1185">Reference proteome</keyword>
<keyword id="KW-0819">tRNA processing</keyword>
<sequence>MPMSQANPRKRIALVIQYIGTHFCGWQRQTAERTVQAVIEETISTVVGQKITIHGAGRTDSGVHAAGQFAHFECESLIPGYKWAKILNDRLPPDINIRGACEVSQDWHAQFSAQWRRYRYTIYTHPTPNLFIQPYAWHYYQAPLDETLIQAALTPLLGEHHLAAFQRTGSKRSHAWVNVQAAECSRRGSFIHIEIQANGFLYGMVRLLVGMLVDIGQGKLSLAQFQDIWKNEKRHLVKYSAPAKGLCLLRVGYPEPLFPPHIWFDTQPTFLLTH</sequence>
<evidence type="ECO:0000255" key="1">
    <source>
        <dbReference type="HAMAP-Rule" id="MF_00171"/>
    </source>
</evidence>